<protein>
    <recommendedName>
        <fullName evidence="1">Probable chemoreceptor glutamine deamidase CheD</fullName>
        <ecNumber evidence="1">3.5.1.44</ecNumber>
    </recommendedName>
</protein>
<geneLocation type="plasmid">
    <name>megaplasmid</name>
</geneLocation>
<gene>
    <name evidence="1" type="primary">cheD</name>
    <name type="ordered locus">Rmet_3692</name>
</gene>
<evidence type="ECO:0000255" key="1">
    <source>
        <dbReference type="HAMAP-Rule" id="MF_01440"/>
    </source>
</evidence>
<sequence length="220" mass="24534">MMRGTPQMPEAIATRKYFDREFDRQAIKLLPNEYYVTAEDVVLTTVLGSCVSACIRDEVAGVGGMNHFMLPDDENAGADRMLSTSMRYGCYALEVLINELLKMGARRERLEAKVFGGGAVLANMTTLNIGDRNADFVLKYLRTEEVRVAAQDLRGPHARRVSYFPRTGLALVRRLTRQDDTVGIEREERALARALSTSTKAPARGAVELFTRQTTARIPT</sequence>
<name>CHED_CUPMC</name>
<reference key="1">
    <citation type="journal article" date="2010" name="PLoS ONE">
        <title>The complete genome sequence of Cupriavidus metallidurans strain CH34, a master survivalist in harsh and anthropogenic environments.</title>
        <authorList>
            <person name="Janssen P.J."/>
            <person name="Van Houdt R."/>
            <person name="Moors H."/>
            <person name="Monsieurs P."/>
            <person name="Morin N."/>
            <person name="Michaux A."/>
            <person name="Benotmane M.A."/>
            <person name="Leys N."/>
            <person name="Vallaeys T."/>
            <person name="Lapidus A."/>
            <person name="Monchy S."/>
            <person name="Medigue C."/>
            <person name="Taghavi S."/>
            <person name="McCorkle S."/>
            <person name="Dunn J."/>
            <person name="van der Lelie D."/>
            <person name="Mergeay M."/>
        </authorList>
    </citation>
    <scope>NUCLEOTIDE SEQUENCE [LARGE SCALE GENOMIC DNA]</scope>
    <source>
        <strain>ATCC 43123 / DSM 2839 / NBRC 102507 / CH34</strain>
    </source>
</reference>
<accession>Q1LH12</accession>
<comment type="function">
    <text evidence="1">Probably deamidates glutamine residues to glutamate on methyl-accepting chemotaxis receptors (MCPs), playing an important role in chemotaxis.</text>
</comment>
<comment type="catalytic activity">
    <reaction evidence="1">
        <text>L-glutaminyl-[protein] + H2O = L-glutamyl-[protein] + NH4(+)</text>
        <dbReference type="Rhea" id="RHEA:16441"/>
        <dbReference type="Rhea" id="RHEA-COMP:10207"/>
        <dbReference type="Rhea" id="RHEA-COMP:10208"/>
        <dbReference type="ChEBI" id="CHEBI:15377"/>
        <dbReference type="ChEBI" id="CHEBI:28938"/>
        <dbReference type="ChEBI" id="CHEBI:29973"/>
        <dbReference type="ChEBI" id="CHEBI:30011"/>
        <dbReference type="EC" id="3.5.1.44"/>
    </reaction>
</comment>
<comment type="similarity">
    <text evidence="1">Belongs to the CheD family.</text>
</comment>
<organism>
    <name type="scientific">Cupriavidus metallidurans (strain ATCC 43123 / DSM 2839 / NBRC 102507 / CH34)</name>
    <name type="common">Ralstonia metallidurans</name>
    <dbReference type="NCBI Taxonomy" id="266264"/>
    <lineage>
        <taxon>Bacteria</taxon>
        <taxon>Pseudomonadati</taxon>
        <taxon>Pseudomonadota</taxon>
        <taxon>Betaproteobacteria</taxon>
        <taxon>Burkholderiales</taxon>
        <taxon>Burkholderiaceae</taxon>
        <taxon>Cupriavidus</taxon>
    </lineage>
</organism>
<dbReference type="EC" id="3.5.1.44" evidence="1"/>
<dbReference type="EMBL" id="CP000353">
    <property type="protein sequence ID" value="ABF10564.1"/>
    <property type="molecule type" value="Genomic_DNA"/>
</dbReference>
<dbReference type="RefSeq" id="WP_011518213.1">
    <property type="nucleotide sequence ID" value="NC_007974.2"/>
</dbReference>
<dbReference type="SMR" id="Q1LH12"/>
<dbReference type="KEGG" id="rme:Rmet_3692"/>
<dbReference type="eggNOG" id="COG1871">
    <property type="taxonomic scope" value="Bacteria"/>
</dbReference>
<dbReference type="HOGENOM" id="CLU_087854_0_0_4"/>
<dbReference type="Proteomes" id="UP000002429">
    <property type="component" value="Plasmid megaplasmid CH34"/>
</dbReference>
<dbReference type="GO" id="GO:0050568">
    <property type="term" value="F:protein-glutamine glutaminase activity"/>
    <property type="evidence" value="ECO:0007669"/>
    <property type="project" value="UniProtKB-UniRule"/>
</dbReference>
<dbReference type="GO" id="GO:0006935">
    <property type="term" value="P:chemotaxis"/>
    <property type="evidence" value="ECO:0007669"/>
    <property type="project" value="UniProtKB-UniRule"/>
</dbReference>
<dbReference type="CDD" id="cd16352">
    <property type="entry name" value="CheD"/>
    <property type="match status" value="1"/>
</dbReference>
<dbReference type="Gene3D" id="3.30.1330.200">
    <property type="match status" value="1"/>
</dbReference>
<dbReference type="HAMAP" id="MF_01440">
    <property type="entry name" value="CheD"/>
    <property type="match status" value="1"/>
</dbReference>
<dbReference type="InterPro" id="IPR038592">
    <property type="entry name" value="CheD-like_sf"/>
</dbReference>
<dbReference type="InterPro" id="IPR005659">
    <property type="entry name" value="Chemorcpt_Glu_NH3ase_CheD"/>
</dbReference>
<dbReference type="InterPro" id="IPR011324">
    <property type="entry name" value="Cytotoxic_necrot_fac-like_cat"/>
</dbReference>
<dbReference type="NCBIfam" id="NF010013">
    <property type="entry name" value="PRK13487.1"/>
    <property type="match status" value="1"/>
</dbReference>
<dbReference type="NCBIfam" id="NF010014">
    <property type="entry name" value="PRK13489.1"/>
    <property type="match status" value="1"/>
</dbReference>
<dbReference type="PANTHER" id="PTHR35147">
    <property type="entry name" value="CHEMORECEPTOR GLUTAMINE DEAMIDASE CHED-RELATED"/>
    <property type="match status" value="1"/>
</dbReference>
<dbReference type="PANTHER" id="PTHR35147:SF2">
    <property type="entry name" value="CHEMORECEPTOR GLUTAMINE DEAMIDASE CHED-RELATED"/>
    <property type="match status" value="1"/>
</dbReference>
<dbReference type="Pfam" id="PF03975">
    <property type="entry name" value="CheD"/>
    <property type="match status" value="1"/>
</dbReference>
<dbReference type="SUPFAM" id="SSF64438">
    <property type="entry name" value="CNF1/YfiH-like putative cysteine hydrolases"/>
    <property type="match status" value="1"/>
</dbReference>
<keyword id="KW-0145">Chemotaxis</keyword>
<keyword id="KW-0378">Hydrolase</keyword>
<keyword id="KW-0614">Plasmid</keyword>
<keyword id="KW-1185">Reference proteome</keyword>
<feature type="chain" id="PRO_0000251054" description="Probable chemoreceptor glutamine deamidase CheD">
    <location>
        <begin position="1"/>
        <end position="220"/>
    </location>
</feature>
<proteinExistence type="inferred from homology"/>